<accession>Q06096</accession>
<accession>D6W4A3</accession>
<protein>
    <recommendedName>
        <fullName>Conserved oligomeric Golgi complex subunit 4</fullName>
        <shortName>COG complex subunit 4</shortName>
    </recommendedName>
    <alternativeName>
        <fullName>Component of oligomeric Golgi complex 4</fullName>
    </alternativeName>
    <alternativeName>
        <fullName>Protein SEC38</fullName>
    </alternativeName>
</protein>
<name>COG4_YEAST</name>
<sequence>MEGQKSNASWESSIIEGQLSKNLARYTLLLDKLSTLSQIDKLSEVIANDYAKQSKQLNAFVQQSQSSLNKESRKLELQRTNLTTTLTQFHETVATISSSNARAKAIHDDIETVDQERALVNKTLQFVKDVRTLKNNISLAHSALETKDYLVAATAINEIRSLPDKKLIVSEFAKKVVPSSEIPEEPAILIKNWCKELTSLFQEQFMEATRTQDIKELTLMFKMFPMIGQDVLGLDLYSKYVCDIIADESRKIMSNSMENSTKFQGFFSQVLLHLFKIVSTIINDHSKVIATCYGKKHMVHVMEKVEKEADLQASLILDIFMETRKIERTIHDINEWEHSQKNEDVNIDSNQSDIETDGETEKSSIISIHDLALLIMEFSQILQNWSMYSRFYSVKWNEFSDLHPHVLQPPPPIADGKFALKLKQDKVFDEFQVFVLNHLQRSFRNSISLEELPSLNDLITAVPLNDHDNISYPVTSVLDDLILLVRKNLISVVNTGQFKLLASFLNELVKFFQNRFLVKFMQNKFKLLQSKLASNVSLKRYIPKGEEQSATSRSVSPPANKFSPLSRFTFRGAAASALTNIQSNLQAVVAEDEDSILALHHYLIYLNTLYLSKVYVHRLLSIEILEDDSQRILRDNFPFDNDAAQLQNLIINSEKLVLEQTDKLSKWAVKYLFQNILQNRVRNLLGTVFVNSASSNSSTSNQKNVSRDYSAGSNQKNYITSIEDFEDLSQINSFNSKWNQLIIPYKNILHNEAYAELLSVIVDYIVTTLEQRIWTLEFNELGVTKLDRELSLFIGNMCGLNYNLREKFLKLTQIVLLLGLDDDNFDLTTGDIKDDFNGTFDWVINSQERIKARNMKIDRTQ</sequence>
<proteinExistence type="evidence at protein level"/>
<gene>
    <name type="primary">COG4</name>
    <name type="synonym">SEC38</name>
    <name type="synonym">SGF1</name>
    <name type="ordered locus">YPR105C</name>
    <name type="ORF">P8283.16</name>
</gene>
<keyword id="KW-0333">Golgi apparatus</keyword>
<keyword id="KW-0472">Membrane</keyword>
<keyword id="KW-0653">Protein transport</keyword>
<keyword id="KW-1185">Reference proteome</keyword>
<keyword id="KW-0813">Transport</keyword>
<dbReference type="EMBL" id="U32445">
    <property type="protein sequence ID" value="AAB68075.1"/>
    <property type="molecule type" value="Genomic_DNA"/>
</dbReference>
<dbReference type="EMBL" id="AY692743">
    <property type="protein sequence ID" value="AAT92762.1"/>
    <property type="molecule type" value="Genomic_DNA"/>
</dbReference>
<dbReference type="EMBL" id="BK006949">
    <property type="protein sequence ID" value="DAA11519.1"/>
    <property type="molecule type" value="Genomic_DNA"/>
</dbReference>
<dbReference type="PIR" id="S59770">
    <property type="entry name" value="S59770"/>
</dbReference>
<dbReference type="RefSeq" id="NP_015430.1">
    <property type="nucleotide sequence ID" value="NM_001184202.1"/>
</dbReference>
<dbReference type="SMR" id="Q06096"/>
<dbReference type="BioGRID" id="36271">
    <property type="interactions" value="593"/>
</dbReference>
<dbReference type="ComplexPortal" id="CPX-1840">
    <property type="entry name" value="COG Golgi transport complex"/>
</dbReference>
<dbReference type="DIP" id="DIP-2003N"/>
<dbReference type="FunCoup" id="Q06096">
    <property type="interactions" value="918"/>
</dbReference>
<dbReference type="IntAct" id="Q06096">
    <property type="interactions" value="27"/>
</dbReference>
<dbReference type="MINT" id="Q06096"/>
<dbReference type="STRING" id="4932.YPR105C"/>
<dbReference type="iPTMnet" id="Q06096"/>
<dbReference type="PaxDb" id="4932-YPR105C"/>
<dbReference type="PeptideAtlas" id="Q06096"/>
<dbReference type="EnsemblFungi" id="YPR105C_mRNA">
    <property type="protein sequence ID" value="YPR105C"/>
    <property type="gene ID" value="YPR105C"/>
</dbReference>
<dbReference type="GeneID" id="856220"/>
<dbReference type="KEGG" id="sce:YPR105C"/>
<dbReference type="AGR" id="SGD:S000006309"/>
<dbReference type="SGD" id="S000006309">
    <property type="gene designation" value="COG4"/>
</dbReference>
<dbReference type="VEuPathDB" id="FungiDB:YPR105C"/>
<dbReference type="eggNOG" id="KOG0412">
    <property type="taxonomic scope" value="Eukaryota"/>
</dbReference>
<dbReference type="GeneTree" id="ENSGT00940000154065"/>
<dbReference type="HOGENOM" id="CLU_014853_3_0_1"/>
<dbReference type="InParanoid" id="Q06096"/>
<dbReference type="OMA" id="DINEWEH"/>
<dbReference type="OrthoDB" id="47059at2759"/>
<dbReference type="BioCyc" id="YEAST:G3O-34245-MONOMER"/>
<dbReference type="BioGRID-ORCS" id="856220">
    <property type="hits" value="0 hits in 10 CRISPR screens"/>
</dbReference>
<dbReference type="PRO" id="PR:Q06096"/>
<dbReference type="Proteomes" id="UP000002311">
    <property type="component" value="Chromosome XVI"/>
</dbReference>
<dbReference type="RNAct" id="Q06096">
    <property type="molecule type" value="protein"/>
</dbReference>
<dbReference type="GO" id="GO:0005829">
    <property type="term" value="C:cytosol"/>
    <property type="evidence" value="ECO:0007005"/>
    <property type="project" value="SGD"/>
</dbReference>
<dbReference type="GO" id="GO:0000139">
    <property type="term" value="C:Golgi membrane"/>
    <property type="evidence" value="ECO:0000303"/>
    <property type="project" value="ComplexPortal"/>
</dbReference>
<dbReference type="GO" id="GO:0017119">
    <property type="term" value="C:Golgi transport complex"/>
    <property type="evidence" value="ECO:0000315"/>
    <property type="project" value="SGD"/>
</dbReference>
<dbReference type="GO" id="GO:0032258">
    <property type="term" value="P:cytoplasm to vacuole targeting by the Cvt pathway"/>
    <property type="evidence" value="ECO:0000315"/>
    <property type="project" value="SGD"/>
</dbReference>
<dbReference type="GO" id="GO:0006891">
    <property type="term" value="P:intra-Golgi vesicle-mediated transport"/>
    <property type="evidence" value="ECO:0000315"/>
    <property type="project" value="SGD"/>
</dbReference>
<dbReference type="GO" id="GO:0016236">
    <property type="term" value="P:macroautophagy"/>
    <property type="evidence" value="ECO:0000315"/>
    <property type="project" value="SGD"/>
</dbReference>
<dbReference type="GO" id="GO:0000425">
    <property type="term" value="P:pexophagy"/>
    <property type="evidence" value="ECO:0000315"/>
    <property type="project" value="SGD"/>
</dbReference>
<dbReference type="GO" id="GO:0000301">
    <property type="term" value="P:retrograde transport, vesicle recycling within Golgi"/>
    <property type="evidence" value="ECO:0000315"/>
    <property type="project" value="SGD"/>
</dbReference>
<dbReference type="FunFam" id="1.20.58.1970:FF:000003">
    <property type="entry name" value="Conserved oligomeric Golgi complex component"/>
    <property type="match status" value="1"/>
</dbReference>
<dbReference type="Gene3D" id="1.20.58.1970">
    <property type="match status" value="1"/>
</dbReference>
<dbReference type="InterPro" id="IPR048682">
    <property type="entry name" value="COG4"/>
</dbReference>
<dbReference type="InterPro" id="IPR048684">
    <property type="entry name" value="COG4_C"/>
</dbReference>
<dbReference type="InterPro" id="IPR013167">
    <property type="entry name" value="COG4_M"/>
</dbReference>
<dbReference type="InterPro" id="IPR048680">
    <property type="entry name" value="COG4_N"/>
</dbReference>
<dbReference type="PANTHER" id="PTHR24016">
    <property type="entry name" value="CONSERVED OLIGOMERIC GOLGI COMPLEX SUBUNIT 4"/>
    <property type="match status" value="1"/>
</dbReference>
<dbReference type="PANTHER" id="PTHR24016:SF0">
    <property type="entry name" value="CONSERVED OLIGOMERIC GOLGI COMPLEX SUBUNIT 4"/>
    <property type="match status" value="1"/>
</dbReference>
<dbReference type="Pfam" id="PF20662">
    <property type="entry name" value="COG4_C"/>
    <property type="match status" value="1"/>
</dbReference>
<dbReference type="Pfam" id="PF08318">
    <property type="entry name" value="COG4_m"/>
    <property type="match status" value="1"/>
</dbReference>
<dbReference type="Pfam" id="PF20663">
    <property type="entry name" value="COG4_N"/>
    <property type="match status" value="1"/>
</dbReference>
<dbReference type="SMART" id="SM00762">
    <property type="entry name" value="Cog4"/>
    <property type="match status" value="1"/>
</dbReference>
<comment type="function">
    <text evidence="4 5">Acts as essential component of the peripheral membrane COG complex that is involved in intra-Golgi protein trafficking. COG is located at the cis-Golgi, and regulates tethering of retrograde intra-Golgi vesicles and possibly a number of other membrane trafficking events. Possesses ATPase activity.</text>
</comment>
<comment type="subunit">
    <text evidence="2 3 4 5">Component of the conserved oligomeric Golgi (COG or Sec34/Sec35) complex which consists of eight different proteins COG1-COG8.</text>
</comment>
<comment type="interaction">
    <interactant intactId="EBI-4823">
        <id>Q06096</id>
    </interactant>
    <interactant intactId="EBI-4835">
        <id>P53079</id>
        <label>COG1</label>
    </interactant>
    <organismsDiffer>false</organismsDiffer>
    <experiments>10</experiments>
</comment>
<comment type="interaction">
    <interactant intactId="EBI-4823">
        <id>Q06096</id>
    </interactant>
    <interactant intactId="EBI-16614">
        <id>P53271</id>
        <label>COG2</label>
    </interactant>
    <organismsDiffer>false</organismsDiffer>
    <experiments>16</experiments>
</comment>
<comment type="interaction">
    <interactant intactId="EBI-4823">
        <id>Q06096</id>
    </interactant>
    <interactant intactId="EBI-16605">
        <id>P40094</id>
        <label>COG3</label>
    </interactant>
    <organismsDiffer>false</organismsDiffer>
    <experiments>5</experiments>
</comment>
<comment type="interaction">
    <interactant intactId="EBI-4823">
        <id>Q06096</id>
    </interactant>
    <interactant intactId="EBI-4841">
        <id>P53951</id>
        <label>COG5</label>
    </interactant>
    <organismsDiffer>false</organismsDiffer>
    <experiments>5</experiments>
</comment>
<comment type="interaction">
    <interactant intactId="EBI-4823">
        <id>Q06096</id>
    </interactant>
    <interactant intactId="EBI-4829">
        <id>P53959</id>
        <label>COG6</label>
    </interactant>
    <organismsDiffer>false</organismsDiffer>
    <experiments>3</experiments>
</comment>
<comment type="interaction">
    <interactant intactId="EBI-4823">
        <id>Q06096</id>
    </interactant>
    <interactant intactId="EBI-4847">
        <id>P53195</id>
        <label>COG7</label>
    </interactant>
    <organismsDiffer>false</organismsDiffer>
    <experiments>3</experiments>
</comment>
<comment type="subcellular location">
    <subcellularLocation>
        <location evidence="1">Golgi apparatus membrane</location>
        <topology evidence="1">Peripheral membrane protein</topology>
        <orientation evidence="1">Cytoplasmic side</orientation>
    </subcellularLocation>
</comment>
<comment type="miscellaneous">
    <text evidence="6">Present with 1620 molecules/cell in log phase SD medium.</text>
</comment>
<comment type="similarity">
    <text evidence="7">Belongs to the COG4 family.</text>
</comment>
<organism>
    <name type="scientific">Saccharomyces cerevisiae (strain ATCC 204508 / S288c)</name>
    <name type="common">Baker's yeast</name>
    <dbReference type="NCBI Taxonomy" id="559292"/>
    <lineage>
        <taxon>Eukaryota</taxon>
        <taxon>Fungi</taxon>
        <taxon>Dikarya</taxon>
        <taxon>Ascomycota</taxon>
        <taxon>Saccharomycotina</taxon>
        <taxon>Saccharomycetes</taxon>
        <taxon>Saccharomycetales</taxon>
        <taxon>Saccharomycetaceae</taxon>
        <taxon>Saccharomyces</taxon>
    </lineage>
</organism>
<feature type="chain" id="PRO_0000213508" description="Conserved oligomeric Golgi complex subunit 4">
    <location>
        <begin position="1"/>
        <end position="861"/>
    </location>
</feature>
<evidence type="ECO:0000250" key="1">
    <source>
        <dbReference type="UniProtKB" id="Q9H9E3"/>
    </source>
</evidence>
<evidence type="ECO:0000269" key="2">
    <source>
    </source>
</evidence>
<evidence type="ECO:0000269" key="3">
    <source>
    </source>
</evidence>
<evidence type="ECO:0000269" key="4">
    <source>
    </source>
</evidence>
<evidence type="ECO:0000269" key="5">
    <source>
    </source>
</evidence>
<evidence type="ECO:0000269" key="6">
    <source>
    </source>
</evidence>
<evidence type="ECO:0000305" key="7"/>
<reference key="1">
    <citation type="journal article" date="1997" name="Nature">
        <title>The nucleotide sequence of Saccharomyces cerevisiae chromosome XVI.</title>
        <authorList>
            <person name="Bussey H."/>
            <person name="Storms R.K."/>
            <person name="Ahmed A."/>
            <person name="Albermann K."/>
            <person name="Allen E."/>
            <person name="Ansorge W."/>
            <person name="Araujo R."/>
            <person name="Aparicio A."/>
            <person name="Barrell B.G."/>
            <person name="Badcock K."/>
            <person name="Benes V."/>
            <person name="Botstein D."/>
            <person name="Bowman S."/>
            <person name="Brueckner M."/>
            <person name="Carpenter J."/>
            <person name="Cherry J.M."/>
            <person name="Chung E."/>
            <person name="Churcher C.M."/>
            <person name="Coster F."/>
            <person name="Davis K."/>
            <person name="Davis R.W."/>
            <person name="Dietrich F.S."/>
            <person name="Delius H."/>
            <person name="DiPaolo T."/>
            <person name="Dubois E."/>
            <person name="Duesterhoeft A."/>
            <person name="Duncan M."/>
            <person name="Floeth M."/>
            <person name="Fortin N."/>
            <person name="Friesen J.D."/>
            <person name="Fritz C."/>
            <person name="Goffeau A."/>
            <person name="Hall J."/>
            <person name="Hebling U."/>
            <person name="Heumann K."/>
            <person name="Hilbert H."/>
            <person name="Hillier L.W."/>
            <person name="Hunicke-Smith S."/>
            <person name="Hyman R.W."/>
            <person name="Johnston M."/>
            <person name="Kalman S."/>
            <person name="Kleine K."/>
            <person name="Komp C."/>
            <person name="Kurdi O."/>
            <person name="Lashkari D."/>
            <person name="Lew H."/>
            <person name="Lin A."/>
            <person name="Lin D."/>
            <person name="Louis E.J."/>
            <person name="Marathe R."/>
            <person name="Messenguy F."/>
            <person name="Mewes H.-W."/>
            <person name="Mirtipati S."/>
            <person name="Moestl D."/>
            <person name="Mueller-Auer S."/>
            <person name="Namath A."/>
            <person name="Nentwich U."/>
            <person name="Oefner P."/>
            <person name="Pearson D."/>
            <person name="Petel F.X."/>
            <person name="Pohl T.M."/>
            <person name="Purnelle B."/>
            <person name="Rajandream M.A."/>
            <person name="Rechmann S."/>
            <person name="Rieger M."/>
            <person name="Riles L."/>
            <person name="Roberts D."/>
            <person name="Schaefer M."/>
            <person name="Scharfe M."/>
            <person name="Scherens B."/>
            <person name="Schramm S."/>
            <person name="Schroeder M."/>
            <person name="Sdicu A.-M."/>
            <person name="Tettelin H."/>
            <person name="Urrestarazu L.A."/>
            <person name="Ushinsky S."/>
            <person name="Vierendeels F."/>
            <person name="Vissers S."/>
            <person name="Voss H."/>
            <person name="Walsh S.V."/>
            <person name="Wambutt R."/>
            <person name="Wang Y."/>
            <person name="Wedler E."/>
            <person name="Wedler H."/>
            <person name="Winnett E."/>
            <person name="Zhong W.-W."/>
            <person name="Zollner A."/>
            <person name="Vo D.H."/>
            <person name="Hani J."/>
        </authorList>
    </citation>
    <scope>NUCLEOTIDE SEQUENCE [LARGE SCALE GENOMIC DNA]</scope>
    <source>
        <strain>ATCC 204508 / S288c</strain>
    </source>
</reference>
<reference key="2">
    <citation type="journal article" date="2014" name="G3 (Bethesda)">
        <title>The reference genome sequence of Saccharomyces cerevisiae: Then and now.</title>
        <authorList>
            <person name="Engel S.R."/>
            <person name="Dietrich F.S."/>
            <person name="Fisk D.G."/>
            <person name="Binkley G."/>
            <person name="Balakrishnan R."/>
            <person name="Costanzo M.C."/>
            <person name="Dwight S.S."/>
            <person name="Hitz B.C."/>
            <person name="Karra K."/>
            <person name="Nash R.S."/>
            <person name="Weng S."/>
            <person name="Wong E.D."/>
            <person name="Lloyd P."/>
            <person name="Skrzypek M.S."/>
            <person name="Miyasato S.R."/>
            <person name="Simison M."/>
            <person name="Cherry J.M."/>
        </authorList>
    </citation>
    <scope>GENOME REANNOTATION</scope>
    <source>
        <strain>ATCC 204508 / S288c</strain>
    </source>
</reference>
<reference key="3">
    <citation type="journal article" date="2007" name="Genome Res.">
        <title>Approaching a complete repository of sequence-verified protein-encoding clones for Saccharomyces cerevisiae.</title>
        <authorList>
            <person name="Hu Y."/>
            <person name="Rolfs A."/>
            <person name="Bhullar B."/>
            <person name="Murthy T.V.S."/>
            <person name="Zhu C."/>
            <person name="Berger M.F."/>
            <person name="Camargo A.A."/>
            <person name="Kelley F."/>
            <person name="McCarron S."/>
            <person name="Jepson D."/>
            <person name="Richardson A."/>
            <person name="Raphael J."/>
            <person name="Moreira D."/>
            <person name="Taycher E."/>
            <person name="Zuo D."/>
            <person name="Mohr S."/>
            <person name="Kane M.F."/>
            <person name="Williamson J."/>
            <person name="Simpson A.J.G."/>
            <person name="Bulyk M.L."/>
            <person name="Harlow E."/>
            <person name="Marsischky G."/>
            <person name="Kolodner R.D."/>
            <person name="LaBaer J."/>
        </authorList>
    </citation>
    <scope>NUCLEOTIDE SEQUENCE [GENOMIC DNA]</scope>
    <source>
        <strain>ATCC 204508 / S288c</strain>
    </source>
</reference>
<reference key="4">
    <citation type="journal article" date="2001" name="Dev. Cell">
        <title>The Sec34/35 Golgi transport complex is related to the exocyst, defining a family of complexes involved in multiple steps of membrane traffic.</title>
        <authorList>
            <person name="Whyte J.R."/>
            <person name="Munro S."/>
        </authorList>
    </citation>
    <scope>SUBUNIT</scope>
</reference>
<reference key="5">
    <citation type="journal article" date="2001" name="Traffic">
        <title>Sgf1p, a new component of the Sec34p/Sec35p complex.</title>
        <authorList>
            <person name="Kim D.W."/>
            <person name="Massey T."/>
            <person name="Sacher M."/>
            <person name="Pypaert M."/>
            <person name="Ferro-Novick S."/>
        </authorList>
    </citation>
    <scope>IDENTIFICATION IN THE COG COMPLEX</scope>
</reference>
<reference key="6">
    <citation type="journal article" date="2002" name="J. Cell Biol.">
        <title>The Sec34/Sec35p complex, a Ypt1p effector required for retrograde intra-Golgi trafficking, interacts with Golgi SNAREs and COPI vesicle coat proteins.</title>
        <authorList>
            <person name="Suvorova E.S."/>
            <person name="Duden R."/>
            <person name="Lupashin V.V."/>
        </authorList>
    </citation>
    <scope>IDENTIFICATION IN THE COG COMPLEX</scope>
    <scope>FUNCTION OF THE COG COMPLEX</scope>
</reference>
<reference key="7">
    <citation type="journal article" date="2002" name="Mol. Biol. Cell">
        <title>Identification of sec36p, sec37p, and sec38p: components of yeast complex that contains sec34p and sec35p.</title>
        <authorList>
            <person name="Ram R.J."/>
            <person name="Li B."/>
            <person name="Kaiser C.A."/>
        </authorList>
    </citation>
    <scope>FUNCTION</scope>
    <scope>IDENTIFICATION IN THE COG COMPLEX</scope>
</reference>
<reference key="8">
    <citation type="journal article" date="2003" name="Nature">
        <title>Global analysis of protein expression in yeast.</title>
        <authorList>
            <person name="Ghaemmaghami S."/>
            <person name="Huh W.-K."/>
            <person name="Bower K."/>
            <person name="Howson R.W."/>
            <person name="Belle A."/>
            <person name="Dephoure N."/>
            <person name="O'Shea E.K."/>
            <person name="Weissman J.S."/>
        </authorList>
    </citation>
    <scope>LEVEL OF PROTEIN EXPRESSION [LARGE SCALE ANALYSIS]</scope>
</reference>
<reference key="9">
    <citation type="journal article" date="2004" name="J. Biol. Chem.">
        <title>The binary interacting network of the conserved oligomeric Golgi tethering complex.</title>
        <authorList>
            <person name="Loh E."/>
            <person name="Hong W."/>
        </authorList>
    </citation>
    <scope>COMPOSITION OF THE COG COMPLEX</scope>
    <scope>INTERACTION WITH COG1; COG2; COG5 AND COG7</scope>
</reference>